<organism>
    <name type="scientific">Staphylococcus aureus (strain Newman)</name>
    <dbReference type="NCBI Taxonomy" id="426430"/>
    <lineage>
        <taxon>Bacteria</taxon>
        <taxon>Bacillati</taxon>
        <taxon>Bacillota</taxon>
        <taxon>Bacilli</taxon>
        <taxon>Bacillales</taxon>
        <taxon>Staphylococcaceae</taxon>
        <taxon>Staphylococcus</taxon>
    </lineage>
</organism>
<dbReference type="EMBL" id="AP009351">
    <property type="protein sequence ID" value="BAF66631.1"/>
    <property type="molecule type" value="Genomic_DNA"/>
</dbReference>
<dbReference type="RefSeq" id="WP_000897044.1">
    <property type="nucleotide sequence ID" value="NZ_JBBIAE010000011.1"/>
</dbReference>
<dbReference type="SMR" id="A6QE49"/>
<dbReference type="GeneID" id="98344693"/>
<dbReference type="KEGG" id="sae:NWMN_0359"/>
<dbReference type="HOGENOM" id="CLU_148710_2_2_9"/>
<dbReference type="Proteomes" id="UP000006386">
    <property type="component" value="Chromosome"/>
</dbReference>
<dbReference type="GO" id="GO:0022627">
    <property type="term" value="C:cytosolic small ribosomal subunit"/>
    <property type="evidence" value="ECO:0007669"/>
    <property type="project" value="TreeGrafter"/>
</dbReference>
<dbReference type="GO" id="GO:0070181">
    <property type="term" value="F:small ribosomal subunit rRNA binding"/>
    <property type="evidence" value="ECO:0007669"/>
    <property type="project" value="TreeGrafter"/>
</dbReference>
<dbReference type="GO" id="GO:0003735">
    <property type="term" value="F:structural constituent of ribosome"/>
    <property type="evidence" value="ECO:0007669"/>
    <property type="project" value="InterPro"/>
</dbReference>
<dbReference type="GO" id="GO:0006412">
    <property type="term" value="P:translation"/>
    <property type="evidence" value="ECO:0007669"/>
    <property type="project" value="UniProtKB-UniRule"/>
</dbReference>
<dbReference type="FunFam" id="4.10.640.10:FF:000003">
    <property type="entry name" value="30S ribosomal protein S18"/>
    <property type="match status" value="1"/>
</dbReference>
<dbReference type="Gene3D" id="4.10.640.10">
    <property type="entry name" value="Ribosomal protein S18"/>
    <property type="match status" value="1"/>
</dbReference>
<dbReference type="HAMAP" id="MF_00270">
    <property type="entry name" value="Ribosomal_bS18"/>
    <property type="match status" value="1"/>
</dbReference>
<dbReference type="InterPro" id="IPR001648">
    <property type="entry name" value="Ribosomal_bS18"/>
</dbReference>
<dbReference type="InterPro" id="IPR018275">
    <property type="entry name" value="Ribosomal_bS18_CS"/>
</dbReference>
<dbReference type="InterPro" id="IPR036870">
    <property type="entry name" value="Ribosomal_bS18_sf"/>
</dbReference>
<dbReference type="NCBIfam" id="TIGR00165">
    <property type="entry name" value="S18"/>
    <property type="match status" value="1"/>
</dbReference>
<dbReference type="PANTHER" id="PTHR13479">
    <property type="entry name" value="30S RIBOSOMAL PROTEIN S18"/>
    <property type="match status" value="1"/>
</dbReference>
<dbReference type="PANTHER" id="PTHR13479:SF40">
    <property type="entry name" value="SMALL RIBOSOMAL SUBUNIT PROTEIN BS18M"/>
    <property type="match status" value="1"/>
</dbReference>
<dbReference type="Pfam" id="PF01084">
    <property type="entry name" value="Ribosomal_S18"/>
    <property type="match status" value="1"/>
</dbReference>
<dbReference type="PRINTS" id="PR00974">
    <property type="entry name" value="RIBOSOMALS18"/>
</dbReference>
<dbReference type="SUPFAM" id="SSF46911">
    <property type="entry name" value="Ribosomal protein S18"/>
    <property type="match status" value="1"/>
</dbReference>
<dbReference type="PROSITE" id="PS00057">
    <property type="entry name" value="RIBOSOMAL_S18"/>
    <property type="match status" value="1"/>
</dbReference>
<reference key="1">
    <citation type="journal article" date="2008" name="J. Bacteriol.">
        <title>Genome sequence of Staphylococcus aureus strain Newman and comparative analysis of staphylococcal genomes: polymorphism and evolution of two major pathogenicity islands.</title>
        <authorList>
            <person name="Baba T."/>
            <person name="Bae T."/>
            <person name="Schneewind O."/>
            <person name="Takeuchi F."/>
            <person name="Hiramatsu K."/>
        </authorList>
    </citation>
    <scope>NUCLEOTIDE SEQUENCE [LARGE SCALE GENOMIC DNA]</scope>
    <source>
        <strain>Newman</strain>
    </source>
</reference>
<keyword id="KW-0687">Ribonucleoprotein</keyword>
<keyword id="KW-0689">Ribosomal protein</keyword>
<keyword id="KW-0694">RNA-binding</keyword>
<keyword id="KW-0699">rRNA-binding</keyword>
<protein>
    <recommendedName>
        <fullName evidence="1">Small ribosomal subunit protein bS18</fullName>
    </recommendedName>
    <alternativeName>
        <fullName evidence="2">30S ribosomal protein S18</fullName>
    </alternativeName>
</protein>
<name>RS18_STAAE</name>
<comment type="function">
    <text evidence="1">Binds as a heterodimer with protein bS6 to the central domain of the 16S rRNA, where it helps stabilize the platform of the 30S subunit.</text>
</comment>
<comment type="subunit">
    <text evidence="1">Part of the 30S ribosomal subunit. Forms a tight heterodimer with protein bS6.</text>
</comment>
<comment type="similarity">
    <text evidence="1">Belongs to the bacterial ribosomal protein bS18 family.</text>
</comment>
<feature type="chain" id="PRO_1000071901" description="Small ribosomal subunit protein bS18">
    <location>
        <begin position="1"/>
        <end position="80"/>
    </location>
</feature>
<proteinExistence type="inferred from homology"/>
<evidence type="ECO:0000255" key="1">
    <source>
        <dbReference type="HAMAP-Rule" id="MF_00270"/>
    </source>
</evidence>
<evidence type="ECO:0000305" key="2"/>
<accession>A6QE49</accession>
<gene>
    <name evidence="1" type="primary">rpsR</name>
    <name type="ordered locus">NWMN_0359</name>
</gene>
<sequence length="80" mass="9310">MAGGPRRGGRRRKKVCYFTANGITHIDYKDTELLKRFISERGKILPRRVTGTSAKYQRMLTTAIKRSRHMALLPYVKEEQ</sequence>